<comment type="function">
    <text evidence="1">Catalyzes the isomerization of sedoheptulose 7-phosphate in D-glycero-D-manno-heptose 7-phosphate.</text>
</comment>
<comment type="catalytic activity">
    <reaction evidence="1">
        <text>2 D-sedoheptulose 7-phosphate = D-glycero-alpha-D-manno-heptose 7-phosphate + D-glycero-beta-D-manno-heptose 7-phosphate</text>
        <dbReference type="Rhea" id="RHEA:27489"/>
        <dbReference type="ChEBI" id="CHEBI:57483"/>
        <dbReference type="ChEBI" id="CHEBI:60203"/>
        <dbReference type="ChEBI" id="CHEBI:60204"/>
        <dbReference type="EC" id="5.3.1.28"/>
    </reaction>
</comment>
<comment type="cofactor">
    <cofactor evidence="1">
        <name>Zn(2+)</name>
        <dbReference type="ChEBI" id="CHEBI:29105"/>
    </cofactor>
    <text evidence="1">Binds 1 zinc ion per subunit.</text>
</comment>
<comment type="pathway">
    <text evidence="1">Carbohydrate biosynthesis; D-glycero-D-manno-heptose 7-phosphate biosynthesis; D-glycero-alpha-D-manno-heptose 7-phosphate and D-glycero-beta-D-manno-heptose 7-phosphate from sedoheptulose 7-phosphate: step 1/1.</text>
</comment>
<comment type="subunit">
    <text evidence="1">Homotetramer.</text>
</comment>
<comment type="subcellular location">
    <subcellularLocation>
        <location evidence="1">Cytoplasm</location>
    </subcellularLocation>
</comment>
<comment type="miscellaneous">
    <text evidence="1">The reaction produces a racemic mixture of D-glycero-alpha-D-manno-heptose 7-phosphate and D-glycero-beta-D-manno-heptose 7-phosphate.</text>
</comment>
<comment type="similarity">
    <text evidence="1">Belongs to the SIS family. GmhA subfamily.</text>
</comment>
<protein>
    <recommendedName>
        <fullName evidence="1">Phosphoheptose isomerase</fullName>
        <ecNumber evidence="1">5.3.1.28</ecNumber>
    </recommendedName>
    <alternativeName>
        <fullName evidence="1">Sedoheptulose 7-phosphate isomerase</fullName>
    </alternativeName>
</protein>
<dbReference type="EC" id="5.3.1.28" evidence="1"/>
<dbReference type="EMBL" id="CP000494">
    <property type="protein sequence ID" value="ABQ37625.1"/>
    <property type="molecule type" value="Genomic_DNA"/>
</dbReference>
<dbReference type="SMR" id="A5EN81"/>
<dbReference type="STRING" id="288000.BBta_5671"/>
<dbReference type="KEGG" id="bbt:BBta_5671"/>
<dbReference type="eggNOG" id="COG0279">
    <property type="taxonomic scope" value="Bacteria"/>
</dbReference>
<dbReference type="HOGENOM" id="CLU_080999_0_1_5"/>
<dbReference type="OrthoDB" id="9810929at2"/>
<dbReference type="UniPathway" id="UPA00041">
    <property type="reaction ID" value="UER00436"/>
</dbReference>
<dbReference type="Proteomes" id="UP000000246">
    <property type="component" value="Chromosome"/>
</dbReference>
<dbReference type="GO" id="GO:0005737">
    <property type="term" value="C:cytoplasm"/>
    <property type="evidence" value="ECO:0007669"/>
    <property type="project" value="UniProtKB-SubCell"/>
</dbReference>
<dbReference type="GO" id="GO:0097367">
    <property type="term" value="F:carbohydrate derivative binding"/>
    <property type="evidence" value="ECO:0007669"/>
    <property type="project" value="InterPro"/>
</dbReference>
<dbReference type="GO" id="GO:0008968">
    <property type="term" value="F:D-sedoheptulose 7-phosphate isomerase activity"/>
    <property type="evidence" value="ECO:0007669"/>
    <property type="project" value="UniProtKB-UniRule"/>
</dbReference>
<dbReference type="GO" id="GO:0008270">
    <property type="term" value="F:zinc ion binding"/>
    <property type="evidence" value="ECO:0007669"/>
    <property type="project" value="UniProtKB-UniRule"/>
</dbReference>
<dbReference type="GO" id="GO:0005975">
    <property type="term" value="P:carbohydrate metabolic process"/>
    <property type="evidence" value="ECO:0007669"/>
    <property type="project" value="UniProtKB-UniRule"/>
</dbReference>
<dbReference type="GO" id="GO:2001061">
    <property type="term" value="P:D-glycero-D-manno-heptose 7-phosphate biosynthetic process"/>
    <property type="evidence" value="ECO:0007669"/>
    <property type="project" value="UniProtKB-UniPathway"/>
</dbReference>
<dbReference type="CDD" id="cd05006">
    <property type="entry name" value="SIS_GmhA"/>
    <property type="match status" value="1"/>
</dbReference>
<dbReference type="Gene3D" id="3.40.50.10490">
    <property type="entry name" value="Glucose-6-phosphate isomerase like protein, domain 1"/>
    <property type="match status" value="1"/>
</dbReference>
<dbReference type="HAMAP" id="MF_00067">
    <property type="entry name" value="GmhA"/>
    <property type="match status" value="1"/>
</dbReference>
<dbReference type="InterPro" id="IPR035461">
    <property type="entry name" value="GmhA/DiaA"/>
</dbReference>
<dbReference type="InterPro" id="IPR004515">
    <property type="entry name" value="Phosphoheptose_Isoase"/>
</dbReference>
<dbReference type="InterPro" id="IPR001347">
    <property type="entry name" value="SIS_dom"/>
</dbReference>
<dbReference type="InterPro" id="IPR046348">
    <property type="entry name" value="SIS_dom_sf"/>
</dbReference>
<dbReference type="InterPro" id="IPR050099">
    <property type="entry name" value="SIS_GmhA/DiaA_subfam"/>
</dbReference>
<dbReference type="PANTHER" id="PTHR30390:SF6">
    <property type="entry name" value="DNAA INITIATOR-ASSOCIATING PROTEIN DIAA"/>
    <property type="match status" value="1"/>
</dbReference>
<dbReference type="PANTHER" id="PTHR30390">
    <property type="entry name" value="SEDOHEPTULOSE 7-PHOSPHATE ISOMERASE / DNAA INITIATOR-ASSOCIATING FACTOR FOR REPLICATION INITIATION"/>
    <property type="match status" value="1"/>
</dbReference>
<dbReference type="Pfam" id="PF13580">
    <property type="entry name" value="SIS_2"/>
    <property type="match status" value="1"/>
</dbReference>
<dbReference type="SUPFAM" id="SSF53697">
    <property type="entry name" value="SIS domain"/>
    <property type="match status" value="1"/>
</dbReference>
<dbReference type="PROSITE" id="PS51464">
    <property type="entry name" value="SIS"/>
    <property type="match status" value="1"/>
</dbReference>
<feature type="chain" id="PRO_1000009053" description="Phosphoheptose isomerase">
    <location>
        <begin position="1"/>
        <end position="198"/>
    </location>
</feature>
<feature type="domain" description="SIS" evidence="1">
    <location>
        <begin position="40"/>
        <end position="198"/>
    </location>
</feature>
<feature type="binding site" evidence="1">
    <location>
        <begin position="55"/>
        <end position="57"/>
    </location>
    <ligand>
        <name>substrate</name>
    </ligand>
</feature>
<feature type="binding site" evidence="1">
    <location>
        <position position="64"/>
    </location>
    <ligand>
        <name>Zn(2+)</name>
        <dbReference type="ChEBI" id="CHEBI:29105"/>
    </ligand>
</feature>
<feature type="binding site" evidence="1">
    <location>
        <position position="68"/>
    </location>
    <ligand>
        <name>substrate</name>
    </ligand>
</feature>
<feature type="binding site" evidence="1">
    <location>
        <position position="68"/>
    </location>
    <ligand>
        <name>Zn(2+)</name>
        <dbReference type="ChEBI" id="CHEBI:29105"/>
    </ligand>
</feature>
<feature type="binding site" evidence="1">
    <location>
        <begin position="97"/>
        <end position="98"/>
    </location>
    <ligand>
        <name>substrate</name>
    </ligand>
</feature>
<feature type="binding site" evidence="1">
    <location>
        <begin position="123"/>
        <end position="125"/>
    </location>
    <ligand>
        <name>substrate</name>
    </ligand>
</feature>
<feature type="binding site" evidence="1">
    <location>
        <position position="128"/>
    </location>
    <ligand>
        <name>substrate</name>
    </ligand>
</feature>
<feature type="binding site" evidence="1">
    <location>
        <position position="175"/>
    </location>
    <ligand>
        <name>substrate</name>
    </ligand>
</feature>
<feature type="binding site" evidence="1">
    <location>
        <position position="175"/>
    </location>
    <ligand>
        <name>Zn(2+)</name>
        <dbReference type="ChEBI" id="CHEBI:29105"/>
    </ligand>
</feature>
<feature type="binding site" evidence="1">
    <location>
        <position position="183"/>
    </location>
    <ligand>
        <name>Zn(2+)</name>
        <dbReference type="ChEBI" id="CHEBI:29105"/>
    </ligand>
</feature>
<reference key="1">
    <citation type="journal article" date="2007" name="Science">
        <title>Legumes symbioses: absence of nod genes in photosynthetic bradyrhizobia.</title>
        <authorList>
            <person name="Giraud E."/>
            <person name="Moulin L."/>
            <person name="Vallenet D."/>
            <person name="Barbe V."/>
            <person name="Cytryn E."/>
            <person name="Avarre J.-C."/>
            <person name="Jaubert M."/>
            <person name="Simon D."/>
            <person name="Cartieaux F."/>
            <person name="Prin Y."/>
            <person name="Bena G."/>
            <person name="Hannibal L."/>
            <person name="Fardoux J."/>
            <person name="Kojadinovic M."/>
            <person name="Vuillet L."/>
            <person name="Lajus A."/>
            <person name="Cruveiller S."/>
            <person name="Rouy Z."/>
            <person name="Mangenot S."/>
            <person name="Segurens B."/>
            <person name="Dossat C."/>
            <person name="Franck W.L."/>
            <person name="Chang W.-S."/>
            <person name="Saunders E."/>
            <person name="Bruce D."/>
            <person name="Richardson P."/>
            <person name="Normand P."/>
            <person name="Dreyfus B."/>
            <person name="Pignol D."/>
            <person name="Stacey G."/>
            <person name="Emerich D."/>
            <person name="Vermeglio A."/>
            <person name="Medigue C."/>
            <person name="Sadowsky M."/>
        </authorList>
    </citation>
    <scope>NUCLEOTIDE SEQUENCE [LARGE SCALE GENOMIC DNA]</scope>
    <source>
        <strain>BTAi1 / ATCC BAA-1182</strain>
    </source>
</reference>
<name>GMHA_BRASB</name>
<organism>
    <name type="scientific">Bradyrhizobium sp. (strain BTAi1 / ATCC BAA-1182)</name>
    <dbReference type="NCBI Taxonomy" id="288000"/>
    <lineage>
        <taxon>Bacteria</taxon>
        <taxon>Pseudomonadati</taxon>
        <taxon>Pseudomonadota</taxon>
        <taxon>Alphaproteobacteria</taxon>
        <taxon>Hyphomicrobiales</taxon>
        <taxon>Nitrobacteraceae</taxon>
        <taxon>Bradyrhizobium</taxon>
    </lineage>
</organism>
<keyword id="KW-0119">Carbohydrate metabolism</keyword>
<keyword id="KW-0963">Cytoplasm</keyword>
<keyword id="KW-0413">Isomerase</keyword>
<keyword id="KW-0479">Metal-binding</keyword>
<keyword id="KW-1185">Reference proteome</keyword>
<keyword id="KW-0862">Zinc</keyword>
<sequence length="198" mass="20498">MNRAADDLIASHLARSHAAMARAAQDTALLASAGRIAAKIVTALRSGRKLLIVGNGGSAADAQHIAAEIVGRYKQERPAFAAIALTTDTSALTAIGNDYGFDHVFARQVEGLGTSGDVLLAISTSGRSPSILNALRKARERGLTTIGFTGANGLAMGELCDELLVAPSDDTPLIQQIHLATAHGICETIEAALMQDLS</sequence>
<proteinExistence type="inferred from homology"/>
<evidence type="ECO:0000255" key="1">
    <source>
        <dbReference type="HAMAP-Rule" id="MF_00067"/>
    </source>
</evidence>
<accession>A5EN81</accession>
<gene>
    <name evidence="1" type="primary">gmhA</name>
    <name type="ordered locus">BBta_5671</name>
</gene>